<comment type="function">
    <text evidence="1">Catalyzes the anti-1,4-elimination of the C-3 phosphate and the C-6 proR hydrogen from 5-enolpyruvylshikimate-3-phosphate (EPSP) to yield chorismate, which is the branch point compound that serves as the starting substrate for the three terminal pathways of aromatic amino acid biosynthesis. This reaction introduces a second double bond into the aromatic ring system.</text>
</comment>
<comment type="catalytic activity">
    <reaction evidence="1">
        <text>5-O-(1-carboxyvinyl)-3-phosphoshikimate = chorismate + phosphate</text>
        <dbReference type="Rhea" id="RHEA:21020"/>
        <dbReference type="ChEBI" id="CHEBI:29748"/>
        <dbReference type="ChEBI" id="CHEBI:43474"/>
        <dbReference type="ChEBI" id="CHEBI:57701"/>
        <dbReference type="EC" id="4.2.3.5"/>
    </reaction>
</comment>
<comment type="cofactor">
    <cofactor evidence="1">
        <name>FMNH2</name>
        <dbReference type="ChEBI" id="CHEBI:57618"/>
    </cofactor>
    <text evidence="1">Reduced FMN (FMNH(2)).</text>
</comment>
<comment type="pathway">
    <text evidence="1">Metabolic intermediate biosynthesis; chorismate biosynthesis; chorismate from D-erythrose 4-phosphate and phosphoenolpyruvate: step 7/7.</text>
</comment>
<comment type="subunit">
    <text evidence="1">Homotetramer.</text>
</comment>
<comment type="similarity">
    <text evidence="1">Belongs to the chorismate synthase family.</text>
</comment>
<reference key="1">
    <citation type="journal article" date="2005" name="J. Infect. Dis.">
        <title>Genome sequence of a serotype M28 strain of group A Streptococcus: potential new insights into puerperal sepsis and bacterial disease specificity.</title>
        <authorList>
            <person name="Green N.M."/>
            <person name="Zhang S."/>
            <person name="Porcella S.F."/>
            <person name="Nagiec M.J."/>
            <person name="Barbian K.D."/>
            <person name="Beres S.B."/>
            <person name="Lefebvre R.B."/>
            <person name="Musser J.M."/>
        </authorList>
    </citation>
    <scope>NUCLEOTIDE SEQUENCE [LARGE SCALE GENOMIC DNA]</scope>
    <source>
        <strain>MGAS6180</strain>
    </source>
</reference>
<proteinExistence type="inferred from homology"/>
<accession>Q48U88</accession>
<keyword id="KW-0028">Amino-acid biosynthesis</keyword>
<keyword id="KW-0057">Aromatic amino acid biosynthesis</keyword>
<keyword id="KW-0274">FAD</keyword>
<keyword id="KW-0285">Flavoprotein</keyword>
<keyword id="KW-0288">FMN</keyword>
<keyword id="KW-0456">Lyase</keyword>
<keyword id="KW-0521">NADP</keyword>
<feature type="chain" id="PRO_0000256349" description="Chorismate synthase">
    <location>
        <begin position="1"/>
        <end position="388"/>
    </location>
</feature>
<feature type="binding site" evidence="1">
    <location>
        <position position="39"/>
    </location>
    <ligand>
        <name>NADP(+)</name>
        <dbReference type="ChEBI" id="CHEBI:58349"/>
    </ligand>
</feature>
<feature type="binding site" evidence="1">
    <location>
        <position position="45"/>
    </location>
    <ligand>
        <name>NADP(+)</name>
        <dbReference type="ChEBI" id="CHEBI:58349"/>
    </ligand>
</feature>
<feature type="binding site" evidence="1">
    <location>
        <begin position="130"/>
        <end position="132"/>
    </location>
    <ligand>
        <name>FMN</name>
        <dbReference type="ChEBI" id="CHEBI:58210"/>
    </ligand>
</feature>
<feature type="binding site" evidence="1">
    <location>
        <begin position="251"/>
        <end position="252"/>
    </location>
    <ligand>
        <name>FMN</name>
        <dbReference type="ChEBI" id="CHEBI:58210"/>
    </ligand>
</feature>
<feature type="binding site" evidence="1">
    <location>
        <position position="296"/>
    </location>
    <ligand>
        <name>FMN</name>
        <dbReference type="ChEBI" id="CHEBI:58210"/>
    </ligand>
</feature>
<feature type="binding site" evidence="1">
    <location>
        <begin position="311"/>
        <end position="315"/>
    </location>
    <ligand>
        <name>FMN</name>
        <dbReference type="ChEBI" id="CHEBI:58210"/>
    </ligand>
</feature>
<feature type="binding site" evidence="1">
    <location>
        <position position="337"/>
    </location>
    <ligand>
        <name>FMN</name>
        <dbReference type="ChEBI" id="CHEBI:58210"/>
    </ligand>
</feature>
<protein>
    <recommendedName>
        <fullName evidence="1">Chorismate synthase</fullName>
        <shortName evidence="1">CS</shortName>
        <ecNumber evidence="1">4.2.3.5</ecNumber>
    </recommendedName>
    <alternativeName>
        <fullName evidence="1">5-enolpyruvylshikimate-3-phosphate phospholyase</fullName>
    </alternativeName>
</protein>
<organism>
    <name type="scientific">Streptococcus pyogenes serotype M28 (strain MGAS6180)</name>
    <dbReference type="NCBI Taxonomy" id="319701"/>
    <lineage>
        <taxon>Bacteria</taxon>
        <taxon>Bacillati</taxon>
        <taxon>Bacillota</taxon>
        <taxon>Bacilli</taxon>
        <taxon>Lactobacillales</taxon>
        <taxon>Streptococcaceae</taxon>
        <taxon>Streptococcus</taxon>
    </lineage>
</organism>
<dbReference type="EC" id="4.2.3.5" evidence="1"/>
<dbReference type="EMBL" id="CP000056">
    <property type="protein sequence ID" value="AAX71718.1"/>
    <property type="molecule type" value="Genomic_DNA"/>
</dbReference>
<dbReference type="SMR" id="Q48U88"/>
<dbReference type="KEGG" id="spb:M28_Spy0604"/>
<dbReference type="HOGENOM" id="CLU_034547_2_0_9"/>
<dbReference type="UniPathway" id="UPA00053">
    <property type="reaction ID" value="UER00090"/>
</dbReference>
<dbReference type="GO" id="GO:0005829">
    <property type="term" value="C:cytosol"/>
    <property type="evidence" value="ECO:0007669"/>
    <property type="project" value="TreeGrafter"/>
</dbReference>
<dbReference type="GO" id="GO:0004107">
    <property type="term" value="F:chorismate synthase activity"/>
    <property type="evidence" value="ECO:0007669"/>
    <property type="project" value="UniProtKB-UniRule"/>
</dbReference>
<dbReference type="GO" id="GO:0010181">
    <property type="term" value="F:FMN binding"/>
    <property type="evidence" value="ECO:0007669"/>
    <property type="project" value="TreeGrafter"/>
</dbReference>
<dbReference type="GO" id="GO:0008652">
    <property type="term" value="P:amino acid biosynthetic process"/>
    <property type="evidence" value="ECO:0007669"/>
    <property type="project" value="UniProtKB-KW"/>
</dbReference>
<dbReference type="GO" id="GO:0009073">
    <property type="term" value="P:aromatic amino acid family biosynthetic process"/>
    <property type="evidence" value="ECO:0007669"/>
    <property type="project" value="UniProtKB-KW"/>
</dbReference>
<dbReference type="GO" id="GO:0009423">
    <property type="term" value="P:chorismate biosynthetic process"/>
    <property type="evidence" value="ECO:0007669"/>
    <property type="project" value="UniProtKB-UniRule"/>
</dbReference>
<dbReference type="CDD" id="cd07304">
    <property type="entry name" value="Chorismate_synthase"/>
    <property type="match status" value="1"/>
</dbReference>
<dbReference type="FunFam" id="3.60.150.10:FF:000002">
    <property type="entry name" value="Chorismate synthase"/>
    <property type="match status" value="1"/>
</dbReference>
<dbReference type="Gene3D" id="3.60.150.10">
    <property type="entry name" value="Chorismate synthase AroC"/>
    <property type="match status" value="1"/>
</dbReference>
<dbReference type="HAMAP" id="MF_00300">
    <property type="entry name" value="Chorismate_synth"/>
    <property type="match status" value="1"/>
</dbReference>
<dbReference type="InterPro" id="IPR000453">
    <property type="entry name" value="Chorismate_synth"/>
</dbReference>
<dbReference type="InterPro" id="IPR035904">
    <property type="entry name" value="Chorismate_synth_AroC_sf"/>
</dbReference>
<dbReference type="InterPro" id="IPR020541">
    <property type="entry name" value="Chorismate_synthase_CS"/>
</dbReference>
<dbReference type="NCBIfam" id="TIGR00033">
    <property type="entry name" value="aroC"/>
    <property type="match status" value="1"/>
</dbReference>
<dbReference type="NCBIfam" id="NF003793">
    <property type="entry name" value="PRK05382.1"/>
    <property type="match status" value="1"/>
</dbReference>
<dbReference type="PANTHER" id="PTHR21085">
    <property type="entry name" value="CHORISMATE SYNTHASE"/>
    <property type="match status" value="1"/>
</dbReference>
<dbReference type="PANTHER" id="PTHR21085:SF0">
    <property type="entry name" value="CHORISMATE SYNTHASE"/>
    <property type="match status" value="1"/>
</dbReference>
<dbReference type="Pfam" id="PF01264">
    <property type="entry name" value="Chorismate_synt"/>
    <property type="match status" value="1"/>
</dbReference>
<dbReference type="PIRSF" id="PIRSF001456">
    <property type="entry name" value="Chorismate_synth"/>
    <property type="match status" value="1"/>
</dbReference>
<dbReference type="SUPFAM" id="SSF103263">
    <property type="entry name" value="Chorismate synthase, AroC"/>
    <property type="match status" value="1"/>
</dbReference>
<dbReference type="PROSITE" id="PS00787">
    <property type="entry name" value="CHORISMATE_SYNTHASE_1"/>
    <property type="match status" value="1"/>
</dbReference>
<dbReference type="PROSITE" id="PS00788">
    <property type="entry name" value="CHORISMATE_SYNTHASE_2"/>
    <property type="match status" value="1"/>
</dbReference>
<dbReference type="PROSITE" id="PS00789">
    <property type="entry name" value="CHORISMATE_SYNTHASE_3"/>
    <property type="match status" value="1"/>
</dbReference>
<name>AROC_STRPM</name>
<sequence length="388" mass="42658">MRYLTAGESHGPSLTAIIEGIPAGLTLHPADIDHELQRRQGGYGRGARMSIETDRVQISSGVRHGKTTGAPITLTVINKDHQKWLDVMAVGDIEETLKLKRRVKHPRPGHADLVGGIKYHFNDLRDALERSSARETTMRVAVGAVAKRILAELGIDMLHHILIFGGITITILYKLSFRELQERALHSELSIVNPKQEEEIKTYIDKIKKEGDTIGGIIETIVQGVPAGLGSYVQWDKKLDAKLAQAVLSINAFKGVEFGVGFDMGFQKGSQVMDEITWTPTQGYGRQTNHLGGFEGGMTTGQPLVVKGVMKPIPTLYKPLMSVDIDSHEPYKATVERSDPTALPAAGVIMENVVATVLAKEILETFSSTTMSELQKAFSDYRAYVKQF</sequence>
<evidence type="ECO:0000255" key="1">
    <source>
        <dbReference type="HAMAP-Rule" id="MF_00300"/>
    </source>
</evidence>
<gene>
    <name evidence="1" type="primary">aroC</name>
    <name type="ordered locus">M28_Spy0604</name>
</gene>